<gene>
    <name type="primary">gammaTub37C</name>
    <name type="synonym">Tub37CD</name>
    <name type="synonym">TubG2</name>
    <name type="synonym">TubG37C</name>
    <name type="ORF">CG17566</name>
</gene>
<organism>
    <name type="scientific">Drosophila melanogaster</name>
    <name type="common">Fruit fly</name>
    <dbReference type="NCBI Taxonomy" id="7227"/>
    <lineage>
        <taxon>Eukaryota</taxon>
        <taxon>Metazoa</taxon>
        <taxon>Ecdysozoa</taxon>
        <taxon>Arthropoda</taxon>
        <taxon>Hexapoda</taxon>
        <taxon>Insecta</taxon>
        <taxon>Pterygota</taxon>
        <taxon>Neoptera</taxon>
        <taxon>Endopterygota</taxon>
        <taxon>Diptera</taxon>
        <taxon>Brachycera</taxon>
        <taxon>Muscomorpha</taxon>
        <taxon>Ephydroidea</taxon>
        <taxon>Drosophilidae</taxon>
        <taxon>Drosophila</taxon>
        <taxon>Sophophora</taxon>
    </lineage>
</organism>
<feature type="chain" id="PRO_0000048455" description="Tubulin gamma-2 chain">
    <location>
        <begin position="1"/>
        <end position="457"/>
    </location>
</feature>
<feature type="binding site" evidence="1">
    <location>
        <begin position="142"/>
        <end position="148"/>
    </location>
    <ligand>
        <name>GTP</name>
        <dbReference type="ChEBI" id="CHEBI:37565"/>
    </ligand>
</feature>
<feature type="sequence conflict" description="In Ref. 2; AAB52553." evidence="7" ref="2">
    <original>T</original>
    <variation>A</variation>
    <location>
        <position position="282"/>
    </location>
</feature>
<feature type="sequence conflict" description="In Ref. 1; AAC35843." evidence="7" ref="1">
    <original>E</original>
    <variation>K</variation>
    <location>
        <position position="343"/>
    </location>
</feature>
<name>TBG2_DROME</name>
<accession>P42271</accession>
<accession>O77160</accession>
<accession>Q9V476</accession>
<comment type="function">
    <text evidence="3 5 6">Tubulin is the major constituent of microtubules. The gamma chain is found at microtubule organizing centers (MTOC) such as the spindle poles or the centrosome, suggesting that it is involved in the minus-end nucleation of microtubule assembly. Required for oocyte activation and consequently for organization of the female meiotic spindle (PubMed:9155007, PubMed:9698447). Essential for centrosome organization and assembly of biastral mitotic spindles in embryos. Plays a role in stabilizing the augmin complex on the meiotic spindle (PubMed:23785300).</text>
</comment>
<comment type="subunit">
    <text evidence="2">Interacts with Ote.</text>
</comment>
<comment type="subcellular location">
    <subcellularLocation>
        <location evidence="5">Cytoplasm</location>
        <location evidence="5">Cytoskeleton</location>
        <location evidence="5">Microtubule organizing center</location>
        <location evidence="5">Centrosome</location>
    </subcellularLocation>
    <subcellularLocation>
        <location evidence="5">Cytoplasm</location>
        <location evidence="5">Cytoskeleton</location>
        <location evidence="5">Spindle</location>
    </subcellularLocation>
    <text>Embryonic mitotic spindle, female meiotic spindle.</text>
</comment>
<comment type="tissue specificity">
    <text evidence="4 6">Expressed in nurse cells and oocytes of developing egg chambers.</text>
</comment>
<comment type="developmental stage">
    <text evidence="4 5">Expressed both maternally and zygotically. Zygotic expression is restricted to adult females.</text>
</comment>
<comment type="disruption phenotype">
    <text evidence="3">RNAi-mediated knockdown in oocytes results in spindle defects.</text>
</comment>
<comment type="similarity">
    <text evidence="7">Belongs to the tubulin family.</text>
</comment>
<reference key="1">
    <citation type="journal article" date="1997" name="EMBO J.">
        <title>Essential role for gamma-tubulin in the acentriolar female meiotic spindle of Drosophila.</title>
        <authorList>
            <person name="Tavosanis G."/>
            <person name="Llamazares S."/>
            <person name="Goulielmos G."/>
            <person name="Gonzalez C."/>
        </authorList>
    </citation>
    <scope>NUCLEOTIDE SEQUENCE [GENOMIC DNA]</scope>
    <scope>FUNCTION</scope>
    <scope>SUBCELLULAR LOCATION</scope>
    <scope>DEVELOPMENTAL STAGE</scope>
</reference>
<reference key="2">
    <citation type="journal article" date="1997" name="Dev. Biol.">
        <title>Differential expression of two gamma-tubulin isoforms during gametogenesis and development in Drosophila.</title>
        <authorList>
            <person name="Wilson P.G."/>
            <person name="Zheng Y."/>
            <person name="Oakley C.E."/>
            <person name="Oakley B.R."/>
            <person name="Borisy G.G."/>
            <person name="Fuller M.T."/>
        </authorList>
    </citation>
    <scope>NUCLEOTIDE SEQUENCE [GENOMIC DNA]</scope>
    <scope>TISSUE SPECIFICITY</scope>
    <scope>DEVELOPMENTAL STAGE</scope>
    <source>
        <tissue>Ovary</tissue>
    </source>
</reference>
<reference key="3">
    <citation type="journal article" date="1998" name="Dev. Biol.">
        <title>Maternally expressed gamma Tub37CD in Drosophila is differentially required for female meiosis and embryonic mitosis.</title>
        <authorList>
            <person name="Wilson P.G."/>
            <person name="Borisy G.G."/>
        </authorList>
    </citation>
    <scope>NUCLEOTIDE SEQUENCE [GENOMIC DNA]</scope>
    <scope>FUNCTION</scope>
    <scope>SUBCELLULAR LOCATION</scope>
    <scope>TISSUE SPECIFICITY</scope>
</reference>
<reference key="4">
    <citation type="journal article" date="2000" name="Science">
        <title>The genome sequence of Drosophila melanogaster.</title>
        <authorList>
            <person name="Adams M.D."/>
            <person name="Celniker S.E."/>
            <person name="Holt R.A."/>
            <person name="Evans C.A."/>
            <person name="Gocayne J.D."/>
            <person name="Amanatides P.G."/>
            <person name="Scherer S.E."/>
            <person name="Li P.W."/>
            <person name="Hoskins R.A."/>
            <person name="Galle R.F."/>
            <person name="George R.A."/>
            <person name="Lewis S.E."/>
            <person name="Richards S."/>
            <person name="Ashburner M."/>
            <person name="Henderson S.N."/>
            <person name="Sutton G.G."/>
            <person name="Wortman J.R."/>
            <person name="Yandell M.D."/>
            <person name="Zhang Q."/>
            <person name="Chen L.X."/>
            <person name="Brandon R.C."/>
            <person name="Rogers Y.-H.C."/>
            <person name="Blazej R.G."/>
            <person name="Champe M."/>
            <person name="Pfeiffer B.D."/>
            <person name="Wan K.H."/>
            <person name="Doyle C."/>
            <person name="Baxter E.G."/>
            <person name="Helt G."/>
            <person name="Nelson C.R."/>
            <person name="Miklos G.L.G."/>
            <person name="Abril J.F."/>
            <person name="Agbayani A."/>
            <person name="An H.-J."/>
            <person name="Andrews-Pfannkoch C."/>
            <person name="Baldwin D."/>
            <person name="Ballew R.M."/>
            <person name="Basu A."/>
            <person name="Baxendale J."/>
            <person name="Bayraktaroglu L."/>
            <person name="Beasley E.M."/>
            <person name="Beeson K.Y."/>
            <person name="Benos P.V."/>
            <person name="Berman B.P."/>
            <person name="Bhandari D."/>
            <person name="Bolshakov S."/>
            <person name="Borkova D."/>
            <person name="Botchan M.R."/>
            <person name="Bouck J."/>
            <person name="Brokstein P."/>
            <person name="Brottier P."/>
            <person name="Burtis K.C."/>
            <person name="Busam D.A."/>
            <person name="Butler H."/>
            <person name="Cadieu E."/>
            <person name="Center A."/>
            <person name="Chandra I."/>
            <person name="Cherry J.M."/>
            <person name="Cawley S."/>
            <person name="Dahlke C."/>
            <person name="Davenport L.B."/>
            <person name="Davies P."/>
            <person name="de Pablos B."/>
            <person name="Delcher A."/>
            <person name="Deng Z."/>
            <person name="Mays A.D."/>
            <person name="Dew I."/>
            <person name="Dietz S.M."/>
            <person name="Dodson K."/>
            <person name="Doup L.E."/>
            <person name="Downes M."/>
            <person name="Dugan-Rocha S."/>
            <person name="Dunkov B.C."/>
            <person name="Dunn P."/>
            <person name="Durbin K.J."/>
            <person name="Evangelista C.C."/>
            <person name="Ferraz C."/>
            <person name="Ferriera S."/>
            <person name="Fleischmann W."/>
            <person name="Fosler C."/>
            <person name="Gabrielian A.E."/>
            <person name="Garg N.S."/>
            <person name="Gelbart W.M."/>
            <person name="Glasser K."/>
            <person name="Glodek A."/>
            <person name="Gong F."/>
            <person name="Gorrell J.H."/>
            <person name="Gu Z."/>
            <person name="Guan P."/>
            <person name="Harris M."/>
            <person name="Harris N.L."/>
            <person name="Harvey D.A."/>
            <person name="Heiman T.J."/>
            <person name="Hernandez J.R."/>
            <person name="Houck J."/>
            <person name="Hostin D."/>
            <person name="Houston K.A."/>
            <person name="Howland T.J."/>
            <person name="Wei M.-H."/>
            <person name="Ibegwam C."/>
            <person name="Jalali M."/>
            <person name="Kalush F."/>
            <person name="Karpen G.H."/>
            <person name="Ke Z."/>
            <person name="Kennison J.A."/>
            <person name="Ketchum K.A."/>
            <person name="Kimmel B.E."/>
            <person name="Kodira C.D."/>
            <person name="Kraft C.L."/>
            <person name="Kravitz S."/>
            <person name="Kulp D."/>
            <person name="Lai Z."/>
            <person name="Lasko P."/>
            <person name="Lei Y."/>
            <person name="Levitsky A.A."/>
            <person name="Li J.H."/>
            <person name="Li Z."/>
            <person name="Liang Y."/>
            <person name="Lin X."/>
            <person name="Liu X."/>
            <person name="Mattei B."/>
            <person name="McIntosh T.C."/>
            <person name="McLeod M.P."/>
            <person name="McPherson D."/>
            <person name="Merkulov G."/>
            <person name="Milshina N.V."/>
            <person name="Mobarry C."/>
            <person name="Morris J."/>
            <person name="Moshrefi A."/>
            <person name="Mount S.M."/>
            <person name="Moy M."/>
            <person name="Murphy B."/>
            <person name="Murphy L."/>
            <person name="Muzny D.M."/>
            <person name="Nelson D.L."/>
            <person name="Nelson D.R."/>
            <person name="Nelson K.A."/>
            <person name="Nixon K."/>
            <person name="Nusskern D.R."/>
            <person name="Pacleb J.M."/>
            <person name="Palazzolo M."/>
            <person name="Pittman G.S."/>
            <person name="Pan S."/>
            <person name="Pollard J."/>
            <person name="Puri V."/>
            <person name="Reese M.G."/>
            <person name="Reinert K."/>
            <person name="Remington K."/>
            <person name="Saunders R.D.C."/>
            <person name="Scheeler F."/>
            <person name="Shen H."/>
            <person name="Shue B.C."/>
            <person name="Siden-Kiamos I."/>
            <person name="Simpson M."/>
            <person name="Skupski M.P."/>
            <person name="Smith T.J."/>
            <person name="Spier E."/>
            <person name="Spradling A.C."/>
            <person name="Stapleton M."/>
            <person name="Strong R."/>
            <person name="Sun E."/>
            <person name="Svirskas R."/>
            <person name="Tector C."/>
            <person name="Turner R."/>
            <person name="Venter E."/>
            <person name="Wang A.H."/>
            <person name="Wang X."/>
            <person name="Wang Z.-Y."/>
            <person name="Wassarman D.A."/>
            <person name="Weinstock G.M."/>
            <person name="Weissenbach J."/>
            <person name="Williams S.M."/>
            <person name="Woodage T."/>
            <person name="Worley K.C."/>
            <person name="Wu D."/>
            <person name="Yang S."/>
            <person name="Yao Q.A."/>
            <person name="Ye J."/>
            <person name="Yeh R.-F."/>
            <person name="Zaveri J.S."/>
            <person name="Zhan M."/>
            <person name="Zhang G."/>
            <person name="Zhao Q."/>
            <person name="Zheng L."/>
            <person name="Zheng X.H."/>
            <person name="Zhong F.N."/>
            <person name="Zhong W."/>
            <person name="Zhou X."/>
            <person name="Zhu S.C."/>
            <person name="Zhu X."/>
            <person name="Smith H.O."/>
            <person name="Gibbs R.A."/>
            <person name="Myers E.W."/>
            <person name="Rubin G.M."/>
            <person name="Venter J.C."/>
        </authorList>
    </citation>
    <scope>NUCLEOTIDE SEQUENCE [LARGE SCALE GENOMIC DNA]</scope>
    <source>
        <strain>Berkeley</strain>
    </source>
</reference>
<reference key="5">
    <citation type="journal article" date="2002" name="Genome Biol.">
        <title>Annotation of the Drosophila melanogaster euchromatic genome: a systematic review.</title>
        <authorList>
            <person name="Misra S."/>
            <person name="Crosby M.A."/>
            <person name="Mungall C.J."/>
            <person name="Matthews B.B."/>
            <person name="Campbell K.S."/>
            <person name="Hradecky P."/>
            <person name="Huang Y."/>
            <person name="Kaminker J.S."/>
            <person name="Millburn G.H."/>
            <person name="Prochnik S.E."/>
            <person name="Smith C.D."/>
            <person name="Tupy J.L."/>
            <person name="Whitfield E.J."/>
            <person name="Bayraktaroglu L."/>
            <person name="Berman B.P."/>
            <person name="Bettencourt B.R."/>
            <person name="Celniker S.E."/>
            <person name="de Grey A.D.N.J."/>
            <person name="Drysdale R.A."/>
            <person name="Harris N.L."/>
            <person name="Richter J."/>
            <person name="Russo S."/>
            <person name="Schroeder A.J."/>
            <person name="Shu S.Q."/>
            <person name="Stapleton M."/>
            <person name="Yamada C."/>
            <person name="Ashburner M."/>
            <person name="Gelbart W.M."/>
            <person name="Rubin G.M."/>
            <person name="Lewis S.E."/>
        </authorList>
    </citation>
    <scope>GENOME REANNOTATION</scope>
    <source>
        <strain>Berkeley</strain>
    </source>
</reference>
<reference key="6">
    <citation type="journal article" date="2002" name="Genome Biol.">
        <title>A Drosophila full-length cDNA resource.</title>
        <authorList>
            <person name="Stapleton M."/>
            <person name="Carlson J.W."/>
            <person name="Brokstein P."/>
            <person name="Yu C."/>
            <person name="Champe M."/>
            <person name="George R.A."/>
            <person name="Guarin H."/>
            <person name="Kronmiller B."/>
            <person name="Pacleb J.M."/>
            <person name="Park S."/>
            <person name="Wan K.H."/>
            <person name="Rubin G.M."/>
            <person name="Celniker S.E."/>
        </authorList>
    </citation>
    <scope>NUCLEOTIDE SEQUENCE [LARGE SCALE MRNA]</scope>
    <source>
        <strain>Berkeley</strain>
        <tissue>Embryo</tissue>
    </source>
</reference>
<reference key="7">
    <citation type="journal article" date="2012" name="Mol. Cell. Biol.">
        <title>Functional analysis of centrosomal kinase substrates in Drosophila melanogaster reveals a new function of the nuclear envelope component otefin in cell cycle progression.</title>
        <authorList>
            <person name="Habermann K."/>
            <person name="Mirgorodskaya E."/>
            <person name="Gobom J."/>
            <person name="Lehmann V."/>
            <person name="Mueller H."/>
            <person name="Bluemlein K."/>
            <person name="Deery M.J."/>
            <person name="Czogiel I."/>
            <person name="Erdmann C."/>
            <person name="Ralser M."/>
            <person name="von Kries J.P."/>
            <person name="Lange B.M."/>
        </authorList>
    </citation>
    <scope>INTERACTION WITH OTE</scope>
</reference>
<reference key="8">
    <citation type="journal article" date="2013" name="PLoS Genet.">
        <title>Meiosis-specific stable binding of augmin to acentrosomal spindle poles promotes biased microtubule assembly in oocytes.</title>
        <authorList>
            <person name="Colombie N."/>
            <person name="Gluszek A.A."/>
            <person name="Meireles A.M."/>
            <person name="Ohkura H."/>
        </authorList>
    </citation>
    <scope>FUNCTION</scope>
    <scope>DISRUPTION PHENOTYPE</scope>
</reference>
<sequence length="457" mass="51296">MPSEIITLQLGQCGNQIGFEFWKRLCLEHGISPDGVLEDFATDGQDRKDVFFYQADDNHYIPRAVLIDLEPRVINNIMTSPYSKLYNQENVFLSKHGGGAGNNWASGFSQGEKVQEEVFDILDREADGSDSLEGFVLCHSIAGGTGSGMGSYVLERLSERFPKKLIQTYSVFPNQDEISDVVVQPYNSILTLKRLTKCADSVVVLDNTALNRIATERLHIQTPTFTQINNLVSTIMSLSTTTLRYPSYMNNNLIGLTASLIPTPQLHFLMTGYTPLMSDCETKTSVRKTTVLDVMRRLLQPKNMMVSALTDKQSRQCFVSILNIIQGEVDPSQVHKSLQRIRERKLANFIPWGPASIQVALPRSSPYVQSAHKVSGLMMANHTGISSLFKRALAQYDKLRKRNAFLDNFRRESMFQDDLTELDIARDTVDCLVQEYEAATQIDYPQWSPAVEASKAG</sequence>
<protein>
    <recommendedName>
        <fullName>Tubulin gamma-2 chain</fullName>
    </recommendedName>
    <alternativeName>
        <fullName>Gamma-2-tubulin</fullName>
    </alternativeName>
</protein>
<proteinExistence type="evidence at protein level"/>
<keyword id="KW-0131">Cell cycle</keyword>
<keyword id="KW-0132">Cell division</keyword>
<keyword id="KW-0963">Cytoplasm</keyword>
<keyword id="KW-0206">Cytoskeleton</keyword>
<keyword id="KW-0342">GTP-binding</keyword>
<keyword id="KW-0469">Meiosis</keyword>
<keyword id="KW-0493">Microtubule</keyword>
<keyword id="KW-0498">Mitosis</keyword>
<keyword id="KW-0547">Nucleotide-binding</keyword>
<keyword id="KW-1185">Reference proteome</keyword>
<dbReference type="EMBL" id="AF081252">
    <property type="protein sequence ID" value="AAC35843.1"/>
    <property type="molecule type" value="Genomic_DNA"/>
</dbReference>
<dbReference type="EMBL" id="AJ010552">
    <property type="protein sequence ID" value="CAA09233.1"/>
    <property type="molecule type" value="Genomic_DNA"/>
</dbReference>
<dbReference type="EMBL" id="M76765">
    <property type="protein sequence ID" value="AAB52553.1"/>
    <property type="molecule type" value="mRNA"/>
</dbReference>
<dbReference type="EMBL" id="AF091265">
    <property type="protein sequence ID" value="AAC64117.1"/>
    <property type="molecule type" value="Genomic_DNA"/>
</dbReference>
<dbReference type="EMBL" id="AE014134">
    <property type="protein sequence ID" value="AAF53774.1"/>
    <property type="molecule type" value="Genomic_DNA"/>
</dbReference>
<dbReference type="EMBL" id="AY070558">
    <property type="protein sequence ID" value="AAL48029.1"/>
    <property type="molecule type" value="mRNA"/>
</dbReference>
<dbReference type="PIR" id="T08419">
    <property type="entry name" value="T08419"/>
</dbReference>
<dbReference type="RefSeq" id="NP_001260565.1">
    <property type="nucleotide sequence ID" value="NM_001273636.1"/>
</dbReference>
<dbReference type="RefSeq" id="NP_476922.1">
    <property type="nucleotide sequence ID" value="NM_057574.5"/>
</dbReference>
<dbReference type="SMR" id="P42271"/>
<dbReference type="BioGRID" id="61183">
    <property type="interactions" value="33"/>
</dbReference>
<dbReference type="ComplexPortal" id="CPX-2776">
    <property type="entry name" value="Gamma-tubulin small complex"/>
</dbReference>
<dbReference type="ComplexPortal" id="CPX-2801">
    <property type="entry name" value="Gamma-tubulin ring complex"/>
</dbReference>
<dbReference type="DIP" id="DIP-60707N"/>
<dbReference type="FunCoup" id="P42271">
    <property type="interactions" value="1474"/>
</dbReference>
<dbReference type="IntAct" id="P42271">
    <property type="interactions" value="11"/>
</dbReference>
<dbReference type="MINT" id="P42271"/>
<dbReference type="STRING" id="7227.FBpp0304827"/>
<dbReference type="PaxDb" id="7227-FBpp0304827"/>
<dbReference type="DNASU" id="35199"/>
<dbReference type="EnsemblMetazoa" id="FBtr0081228">
    <property type="protein sequence ID" value="FBpp0080769"/>
    <property type="gene ID" value="FBgn0010097"/>
</dbReference>
<dbReference type="EnsemblMetazoa" id="FBtr0332572">
    <property type="protein sequence ID" value="FBpp0304827"/>
    <property type="gene ID" value="FBgn0010097"/>
</dbReference>
<dbReference type="GeneID" id="35199"/>
<dbReference type="KEGG" id="dme:Dmel_CG17566"/>
<dbReference type="AGR" id="FB:FBgn0010097"/>
<dbReference type="CTD" id="35199"/>
<dbReference type="FlyBase" id="FBgn0010097">
    <property type="gene designation" value="gammaTub37C"/>
</dbReference>
<dbReference type="VEuPathDB" id="VectorBase:FBgn0010097"/>
<dbReference type="eggNOG" id="KOG1374">
    <property type="taxonomic scope" value="Eukaryota"/>
</dbReference>
<dbReference type="GeneTree" id="ENSGT00940000174463"/>
<dbReference type="HOGENOM" id="CLU_015718_1_0_1"/>
<dbReference type="InParanoid" id="P42271"/>
<dbReference type="OMA" id="ASGFSQX"/>
<dbReference type="OrthoDB" id="10249382at2759"/>
<dbReference type="PhylomeDB" id="P42271"/>
<dbReference type="BioGRID-ORCS" id="35199">
    <property type="hits" value="0 hits in 3 CRISPR screens"/>
</dbReference>
<dbReference type="ChiTaRS" id="gammaTub37C">
    <property type="organism name" value="fly"/>
</dbReference>
<dbReference type="GenomeRNAi" id="35199"/>
<dbReference type="PRO" id="PR:P42271"/>
<dbReference type="Proteomes" id="UP000000803">
    <property type="component" value="Chromosome 2L"/>
</dbReference>
<dbReference type="Bgee" id="FBgn0010097">
    <property type="expression patterns" value="Expressed in secondary oocyte and 9 other cell types or tissues"/>
</dbReference>
<dbReference type="ExpressionAtlas" id="P42271">
    <property type="expression patterns" value="baseline and differential"/>
</dbReference>
<dbReference type="GO" id="GO:0005813">
    <property type="term" value="C:centrosome"/>
    <property type="evidence" value="ECO:0000314"/>
    <property type="project" value="FlyBase"/>
</dbReference>
<dbReference type="GO" id="GO:0005737">
    <property type="term" value="C:cytoplasm"/>
    <property type="evidence" value="ECO:0000314"/>
    <property type="project" value="FlyBase"/>
</dbReference>
<dbReference type="GO" id="GO:0000931">
    <property type="term" value="C:gamma-tubulin ring complex"/>
    <property type="evidence" value="ECO:0000314"/>
    <property type="project" value="FlyBase"/>
</dbReference>
<dbReference type="GO" id="GO:0072687">
    <property type="term" value="C:meiotic spindle"/>
    <property type="evidence" value="ECO:0000314"/>
    <property type="project" value="FlyBase"/>
</dbReference>
<dbReference type="GO" id="GO:0005874">
    <property type="term" value="C:microtubule"/>
    <property type="evidence" value="ECO:0007669"/>
    <property type="project" value="UniProtKB-KW"/>
</dbReference>
<dbReference type="GO" id="GO:0005634">
    <property type="term" value="C:nucleus"/>
    <property type="evidence" value="ECO:0000318"/>
    <property type="project" value="GO_Central"/>
</dbReference>
<dbReference type="GO" id="GO:0005819">
    <property type="term" value="C:spindle"/>
    <property type="evidence" value="ECO:0000314"/>
    <property type="project" value="FlyBase"/>
</dbReference>
<dbReference type="GO" id="GO:0005525">
    <property type="term" value="F:GTP binding"/>
    <property type="evidence" value="ECO:0000314"/>
    <property type="project" value="FlyBase"/>
</dbReference>
<dbReference type="GO" id="GO:0140490">
    <property type="term" value="F:microtubule nucleator activity"/>
    <property type="evidence" value="ECO:0000318"/>
    <property type="project" value="GO_Central"/>
</dbReference>
<dbReference type="GO" id="GO:0051316">
    <property type="term" value="P:attachment of meiotic spindle microtubules to kinetochore"/>
    <property type="evidence" value="ECO:0000315"/>
    <property type="project" value="FlyBase"/>
</dbReference>
<dbReference type="GO" id="GO:0051301">
    <property type="term" value="P:cell division"/>
    <property type="evidence" value="ECO:0007669"/>
    <property type="project" value="UniProtKB-KW"/>
</dbReference>
<dbReference type="GO" id="GO:0031122">
    <property type="term" value="P:cytoplasmic microtubule organization"/>
    <property type="evidence" value="ECO:0007669"/>
    <property type="project" value="InterPro"/>
</dbReference>
<dbReference type="GO" id="GO:0000212">
    <property type="term" value="P:meiotic spindle organization"/>
    <property type="evidence" value="ECO:0000318"/>
    <property type="project" value="GO_Central"/>
</dbReference>
<dbReference type="GO" id="GO:0007020">
    <property type="term" value="P:microtubule nucleation"/>
    <property type="evidence" value="ECO:0000318"/>
    <property type="project" value="GO_Central"/>
</dbReference>
<dbReference type="GO" id="GO:0000278">
    <property type="term" value="P:mitotic cell cycle"/>
    <property type="evidence" value="ECO:0000318"/>
    <property type="project" value="GO_Central"/>
</dbReference>
<dbReference type="GO" id="GO:0000070">
    <property type="term" value="P:mitotic sister chromatid segregation"/>
    <property type="evidence" value="ECO:0000318"/>
    <property type="project" value="GO_Central"/>
</dbReference>
<dbReference type="GO" id="GO:0007052">
    <property type="term" value="P:mitotic spindle organization"/>
    <property type="evidence" value="ECO:0000318"/>
    <property type="project" value="GO_Central"/>
</dbReference>
<dbReference type="GO" id="GO:0090221">
    <property type="term" value="P:mitotic spindle-templated microtubule nucleation"/>
    <property type="evidence" value="ECO:0000314"/>
    <property type="project" value="FlyBase"/>
</dbReference>
<dbReference type="GO" id="GO:0007312">
    <property type="term" value="P:oocyte nucleus migration involved in oocyte dorsal/ventral axis specification"/>
    <property type="evidence" value="ECO:0000315"/>
    <property type="project" value="FlyBase"/>
</dbReference>
<dbReference type="GO" id="GO:0007057">
    <property type="term" value="P:spindle assembly involved in female meiosis I"/>
    <property type="evidence" value="ECO:0000315"/>
    <property type="project" value="FlyBase"/>
</dbReference>
<dbReference type="CDD" id="cd02188">
    <property type="entry name" value="gamma_tubulin"/>
    <property type="match status" value="1"/>
</dbReference>
<dbReference type="FunFam" id="1.10.287.600:FF:000004">
    <property type="entry name" value="Tubulin gamma chain"/>
    <property type="match status" value="1"/>
</dbReference>
<dbReference type="FunFam" id="3.30.1330.20:FF:000003">
    <property type="entry name" value="Tubulin gamma chain"/>
    <property type="match status" value="1"/>
</dbReference>
<dbReference type="FunFam" id="3.40.50.1440:FF:000010">
    <property type="entry name" value="Tubulin gamma chain"/>
    <property type="match status" value="1"/>
</dbReference>
<dbReference type="Gene3D" id="1.10.287.600">
    <property type="entry name" value="Helix hairpin bin"/>
    <property type="match status" value="1"/>
</dbReference>
<dbReference type="Gene3D" id="3.30.1330.20">
    <property type="entry name" value="Tubulin/FtsZ, C-terminal domain"/>
    <property type="match status" value="1"/>
</dbReference>
<dbReference type="Gene3D" id="3.40.50.1440">
    <property type="entry name" value="Tubulin/FtsZ, GTPase domain"/>
    <property type="match status" value="1"/>
</dbReference>
<dbReference type="InterPro" id="IPR002454">
    <property type="entry name" value="Gamma_tubulin"/>
</dbReference>
<dbReference type="InterPro" id="IPR008280">
    <property type="entry name" value="Tub_FtsZ_C"/>
</dbReference>
<dbReference type="InterPro" id="IPR000217">
    <property type="entry name" value="Tubulin"/>
</dbReference>
<dbReference type="InterPro" id="IPR037103">
    <property type="entry name" value="Tubulin/FtsZ-like_C"/>
</dbReference>
<dbReference type="InterPro" id="IPR018316">
    <property type="entry name" value="Tubulin/FtsZ_2-layer-sand-dom"/>
</dbReference>
<dbReference type="InterPro" id="IPR036525">
    <property type="entry name" value="Tubulin/FtsZ_GTPase_sf"/>
</dbReference>
<dbReference type="InterPro" id="IPR023123">
    <property type="entry name" value="Tubulin_C"/>
</dbReference>
<dbReference type="InterPro" id="IPR017975">
    <property type="entry name" value="Tubulin_CS"/>
</dbReference>
<dbReference type="InterPro" id="IPR003008">
    <property type="entry name" value="Tubulin_FtsZ_GTPase"/>
</dbReference>
<dbReference type="PANTHER" id="PTHR11588">
    <property type="entry name" value="TUBULIN"/>
    <property type="match status" value="1"/>
</dbReference>
<dbReference type="Pfam" id="PF00091">
    <property type="entry name" value="Tubulin"/>
    <property type="match status" value="1"/>
</dbReference>
<dbReference type="Pfam" id="PF03953">
    <property type="entry name" value="Tubulin_C"/>
    <property type="match status" value="1"/>
</dbReference>
<dbReference type="PRINTS" id="PR01164">
    <property type="entry name" value="GAMMATUBULIN"/>
</dbReference>
<dbReference type="PRINTS" id="PR01161">
    <property type="entry name" value="TUBULIN"/>
</dbReference>
<dbReference type="SMART" id="SM00864">
    <property type="entry name" value="Tubulin"/>
    <property type="match status" value="1"/>
</dbReference>
<dbReference type="SMART" id="SM00865">
    <property type="entry name" value="Tubulin_C"/>
    <property type="match status" value="1"/>
</dbReference>
<dbReference type="SUPFAM" id="SSF55307">
    <property type="entry name" value="Tubulin C-terminal domain-like"/>
    <property type="match status" value="1"/>
</dbReference>
<dbReference type="SUPFAM" id="SSF52490">
    <property type="entry name" value="Tubulin nucleotide-binding domain-like"/>
    <property type="match status" value="1"/>
</dbReference>
<dbReference type="PROSITE" id="PS00227">
    <property type="entry name" value="TUBULIN"/>
    <property type="match status" value="1"/>
</dbReference>
<evidence type="ECO:0000255" key="1"/>
<evidence type="ECO:0000269" key="2">
    <source>
    </source>
</evidence>
<evidence type="ECO:0000269" key="3">
    <source>
    </source>
</evidence>
<evidence type="ECO:0000269" key="4">
    <source>
    </source>
</evidence>
<evidence type="ECO:0000269" key="5">
    <source>
    </source>
</evidence>
<evidence type="ECO:0000269" key="6">
    <source>
    </source>
</evidence>
<evidence type="ECO:0000305" key="7"/>